<proteinExistence type="inferred from homology"/>
<sequence>MRPSGRKIDQMRKVSFERNFSKHAEGSCLVKFGDTHVLCTASLEEKTPPWLRNTGKGWVTAEYGMLPRATGERMKREAAAGKQGGRTQEIQRLIGRSLRAVVDLQALGERQITLDCDVIQADGGTRTASITGGWIALYDCLKWMESRNMIKVDRVLKDHVAAISCGIFASQPVIDLDYLEDSSAETDANFVMTGTGGIVEIQGTAEGTPFSEGEFTSLMQLARNGIGELVALQKQAVEG</sequence>
<dbReference type="EC" id="2.7.7.56" evidence="1"/>
<dbReference type="EMBL" id="AM236080">
    <property type="protein sequence ID" value="CAK05871.1"/>
    <property type="molecule type" value="Genomic_DNA"/>
</dbReference>
<dbReference type="RefSeq" id="WP_011650181.1">
    <property type="nucleotide sequence ID" value="NC_008380.1"/>
</dbReference>
<dbReference type="SMR" id="Q1MMD1"/>
<dbReference type="EnsemblBacteria" id="CAK05871">
    <property type="protein sequence ID" value="CAK05871"/>
    <property type="gene ID" value="RL0380"/>
</dbReference>
<dbReference type="GeneID" id="75218198"/>
<dbReference type="KEGG" id="rle:RL0380"/>
<dbReference type="eggNOG" id="COG0689">
    <property type="taxonomic scope" value="Bacteria"/>
</dbReference>
<dbReference type="HOGENOM" id="CLU_050858_0_0_5"/>
<dbReference type="Proteomes" id="UP000006575">
    <property type="component" value="Chromosome"/>
</dbReference>
<dbReference type="GO" id="GO:0000175">
    <property type="term" value="F:3'-5'-RNA exonuclease activity"/>
    <property type="evidence" value="ECO:0007669"/>
    <property type="project" value="UniProtKB-UniRule"/>
</dbReference>
<dbReference type="GO" id="GO:0000049">
    <property type="term" value="F:tRNA binding"/>
    <property type="evidence" value="ECO:0007669"/>
    <property type="project" value="UniProtKB-UniRule"/>
</dbReference>
<dbReference type="GO" id="GO:0009022">
    <property type="term" value="F:tRNA nucleotidyltransferase activity"/>
    <property type="evidence" value="ECO:0007669"/>
    <property type="project" value="UniProtKB-UniRule"/>
</dbReference>
<dbReference type="GO" id="GO:0016075">
    <property type="term" value="P:rRNA catabolic process"/>
    <property type="evidence" value="ECO:0007669"/>
    <property type="project" value="UniProtKB-UniRule"/>
</dbReference>
<dbReference type="GO" id="GO:0006364">
    <property type="term" value="P:rRNA processing"/>
    <property type="evidence" value="ECO:0007669"/>
    <property type="project" value="UniProtKB-KW"/>
</dbReference>
<dbReference type="GO" id="GO:0008033">
    <property type="term" value="P:tRNA processing"/>
    <property type="evidence" value="ECO:0007669"/>
    <property type="project" value="UniProtKB-UniRule"/>
</dbReference>
<dbReference type="CDD" id="cd11362">
    <property type="entry name" value="RNase_PH_bact"/>
    <property type="match status" value="1"/>
</dbReference>
<dbReference type="FunFam" id="3.30.230.70:FF:000003">
    <property type="entry name" value="Ribonuclease PH"/>
    <property type="match status" value="1"/>
</dbReference>
<dbReference type="Gene3D" id="3.30.230.70">
    <property type="entry name" value="GHMP Kinase, N-terminal domain"/>
    <property type="match status" value="1"/>
</dbReference>
<dbReference type="HAMAP" id="MF_00564">
    <property type="entry name" value="RNase_PH"/>
    <property type="match status" value="1"/>
</dbReference>
<dbReference type="InterPro" id="IPR001247">
    <property type="entry name" value="ExoRNase_PH_dom1"/>
</dbReference>
<dbReference type="InterPro" id="IPR015847">
    <property type="entry name" value="ExoRNase_PH_dom2"/>
</dbReference>
<dbReference type="InterPro" id="IPR036345">
    <property type="entry name" value="ExoRNase_PH_dom2_sf"/>
</dbReference>
<dbReference type="InterPro" id="IPR027408">
    <property type="entry name" value="PNPase/RNase_PH_dom_sf"/>
</dbReference>
<dbReference type="InterPro" id="IPR020568">
    <property type="entry name" value="Ribosomal_Su5_D2-typ_SF"/>
</dbReference>
<dbReference type="InterPro" id="IPR050080">
    <property type="entry name" value="RNase_PH"/>
</dbReference>
<dbReference type="InterPro" id="IPR002381">
    <property type="entry name" value="RNase_PH_bac-type"/>
</dbReference>
<dbReference type="InterPro" id="IPR018336">
    <property type="entry name" value="RNase_PH_CS"/>
</dbReference>
<dbReference type="NCBIfam" id="TIGR01966">
    <property type="entry name" value="RNasePH"/>
    <property type="match status" value="1"/>
</dbReference>
<dbReference type="PANTHER" id="PTHR11953">
    <property type="entry name" value="EXOSOME COMPLEX COMPONENT"/>
    <property type="match status" value="1"/>
</dbReference>
<dbReference type="PANTHER" id="PTHR11953:SF0">
    <property type="entry name" value="EXOSOME COMPLEX COMPONENT RRP41"/>
    <property type="match status" value="1"/>
</dbReference>
<dbReference type="Pfam" id="PF01138">
    <property type="entry name" value="RNase_PH"/>
    <property type="match status" value="1"/>
</dbReference>
<dbReference type="Pfam" id="PF03725">
    <property type="entry name" value="RNase_PH_C"/>
    <property type="match status" value="1"/>
</dbReference>
<dbReference type="SUPFAM" id="SSF55666">
    <property type="entry name" value="Ribonuclease PH domain 2-like"/>
    <property type="match status" value="1"/>
</dbReference>
<dbReference type="SUPFAM" id="SSF54211">
    <property type="entry name" value="Ribosomal protein S5 domain 2-like"/>
    <property type="match status" value="1"/>
</dbReference>
<dbReference type="PROSITE" id="PS01277">
    <property type="entry name" value="RIBONUCLEASE_PH"/>
    <property type="match status" value="1"/>
</dbReference>
<feature type="chain" id="PRO_1000024862" description="Ribonuclease PH">
    <location>
        <begin position="1"/>
        <end position="239"/>
    </location>
</feature>
<feature type="binding site" evidence="1">
    <location>
        <position position="86"/>
    </location>
    <ligand>
        <name>phosphate</name>
        <dbReference type="ChEBI" id="CHEBI:43474"/>
        <note>substrate</note>
    </ligand>
</feature>
<feature type="binding site" evidence="1">
    <location>
        <begin position="124"/>
        <end position="126"/>
    </location>
    <ligand>
        <name>phosphate</name>
        <dbReference type="ChEBI" id="CHEBI:43474"/>
        <note>substrate</note>
    </ligand>
</feature>
<evidence type="ECO:0000255" key="1">
    <source>
        <dbReference type="HAMAP-Rule" id="MF_00564"/>
    </source>
</evidence>
<keyword id="KW-0548">Nucleotidyltransferase</keyword>
<keyword id="KW-0694">RNA-binding</keyword>
<keyword id="KW-0698">rRNA processing</keyword>
<keyword id="KW-0808">Transferase</keyword>
<keyword id="KW-0819">tRNA processing</keyword>
<keyword id="KW-0820">tRNA-binding</keyword>
<accession>Q1MMD1</accession>
<name>RNPH_RHIJ3</name>
<reference key="1">
    <citation type="journal article" date="2006" name="Genome Biol.">
        <title>The genome of Rhizobium leguminosarum has recognizable core and accessory components.</title>
        <authorList>
            <person name="Young J.P.W."/>
            <person name="Crossman L.C."/>
            <person name="Johnston A.W.B."/>
            <person name="Thomson N.R."/>
            <person name="Ghazoui Z.F."/>
            <person name="Hull K.H."/>
            <person name="Wexler M."/>
            <person name="Curson A.R.J."/>
            <person name="Todd J.D."/>
            <person name="Poole P.S."/>
            <person name="Mauchline T.H."/>
            <person name="East A.K."/>
            <person name="Quail M.A."/>
            <person name="Churcher C."/>
            <person name="Arrowsmith C."/>
            <person name="Cherevach I."/>
            <person name="Chillingworth T."/>
            <person name="Clarke K."/>
            <person name="Cronin A."/>
            <person name="Davis P."/>
            <person name="Fraser A."/>
            <person name="Hance Z."/>
            <person name="Hauser H."/>
            <person name="Jagels K."/>
            <person name="Moule S."/>
            <person name="Mungall K."/>
            <person name="Norbertczak H."/>
            <person name="Rabbinowitsch E."/>
            <person name="Sanders M."/>
            <person name="Simmonds M."/>
            <person name="Whitehead S."/>
            <person name="Parkhill J."/>
        </authorList>
    </citation>
    <scope>NUCLEOTIDE SEQUENCE [LARGE SCALE GENOMIC DNA]</scope>
    <source>
        <strain>DSM 114642 / LMG 32736 / 3841</strain>
    </source>
</reference>
<protein>
    <recommendedName>
        <fullName evidence="1">Ribonuclease PH</fullName>
        <shortName evidence="1">RNase PH</shortName>
        <ecNumber evidence="1">2.7.7.56</ecNumber>
    </recommendedName>
    <alternativeName>
        <fullName evidence="1">tRNA nucleotidyltransferase</fullName>
    </alternativeName>
</protein>
<comment type="function">
    <text evidence="1">Phosphorolytic 3'-5' exoribonuclease that plays an important role in tRNA 3'-end maturation. Removes nucleotide residues following the 3'-CCA terminus of tRNAs; can also add nucleotides to the ends of RNA molecules by using nucleoside diphosphates as substrates, but this may not be physiologically important. Probably plays a role in initiation of 16S rRNA degradation (leading to ribosome degradation) during starvation.</text>
</comment>
<comment type="catalytic activity">
    <reaction evidence="1">
        <text>tRNA(n+1) + phosphate = tRNA(n) + a ribonucleoside 5'-diphosphate</text>
        <dbReference type="Rhea" id="RHEA:10628"/>
        <dbReference type="Rhea" id="RHEA-COMP:17343"/>
        <dbReference type="Rhea" id="RHEA-COMP:17344"/>
        <dbReference type="ChEBI" id="CHEBI:43474"/>
        <dbReference type="ChEBI" id="CHEBI:57930"/>
        <dbReference type="ChEBI" id="CHEBI:173114"/>
        <dbReference type="EC" id="2.7.7.56"/>
    </reaction>
</comment>
<comment type="subunit">
    <text evidence="1">Homohexameric ring arranged as a trimer of dimers.</text>
</comment>
<comment type="similarity">
    <text evidence="1">Belongs to the RNase PH family.</text>
</comment>
<organism>
    <name type="scientific">Rhizobium johnstonii (strain DSM 114642 / LMG 32736 / 3841)</name>
    <name type="common">Rhizobium leguminosarum bv. viciae</name>
    <dbReference type="NCBI Taxonomy" id="216596"/>
    <lineage>
        <taxon>Bacteria</taxon>
        <taxon>Pseudomonadati</taxon>
        <taxon>Pseudomonadota</taxon>
        <taxon>Alphaproteobacteria</taxon>
        <taxon>Hyphomicrobiales</taxon>
        <taxon>Rhizobiaceae</taxon>
        <taxon>Rhizobium/Agrobacterium group</taxon>
        <taxon>Rhizobium</taxon>
        <taxon>Rhizobium johnstonii</taxon>
    </lineage>
</organism>
<gene>
    <name evidence="1" type="primary">rph</name>
    <name type="ordered locus">RL0380</name>
</gene>